<dbReference type="EMBL" id="CP000504">
    <property type="protein sequence ID" value="ABL87947.1"/>
    <property type="molecule type" value="Genomic_DNA"/>
</dbReference>
<dbReference type="RefSeq" id="WP_011762523.1">
    <property type="nucleotide sequence ID" value="NC_008701.1"/>
</dbReference>
<dbReference type="SMR" id="A1RSL5"/>
<dbReference type="STRING" id="384616.Pisl_0771"/>
<dbReference type="GeneID" id="4618043"/>
<dbReference type="KEGG" id="pis:Pisl_0771"/>
<dbReference type="eggNOG" id="arCOG04186">
    <property type="taxonomic scope" value="Archaea"/>
</dbReference>
<dbReference type="HOGENOM" id="CLU_062507_1_0_2"/>
<dbReference type="OrthoDB" id="30639at2157"/>
<dbReference type="Proteomes" id="UP000002595">
    <property type="component" value="Chromosome"/>
</dbReference>
<dbReference type="GO" id="GO:1990904">
    <property type="term" value="C:ribonucleoprotein complex"/>
    <property type="evidence" value="ECO:0007669"/>
    <property type="project" value="UniProtKB-KW"/>
</dbReference>
<dbReference type="GO" id="GO:0005840">
    <property type="term" value="C:ribosome"/>
    <property type="evidence" value="ECO:0007669"/>
    <property type="project" value="UniProtKB-KW"/>
</dbReference>
<dbReference type="GO" id="GO:0003735">
    <property type="term" value="F:structural constituent of ribosome"/>
    <property type="evidence" value="ECO:0007669"/>
    <property type="project" value="InterPro"/>
</dbReference>
<dbReference type="GO" id="GO:0006412">
    <property type="term" value="P:translation"/>
    <property type="evidence" value="ECO:0007669"/>
    <property type="project" value="UniProtKB-UniRule"/>
</dbReference>
<dbReference type="HAMAP" id="MF_00359">
    <property type="entry name" value="Ribosomal_eS1"/>
    <property type="match status" value="1"/>
</dbReference>
<dbReference type="InterPro" id="IPR001593">
    <property type="entry name" value="Ribosomal_eS1"/>
</dbReference>
<dbReference type="InterPro" id="IPR030838">
    <property type="entry name" value="Ribosomal_eS1_arc"/>
</dbReference>
<dbReference type="NCBIfam" id="NF003142">
    <property type="entry name" value="PRK04057.1"/>
    <property type="match status" value="1"/>
</dbReference>
<dbReference type="PANTHER" id="PTHR11830">
    <property type="entry name" value="40S RIBOSOMAL PROTEIN S3A"/>
    <property type="match status" value="1"/>
</dbReference>
<dbReference type="Pfam" id="PF01015">
    <property type="entry name" value="Ribosomal_S3Ae"/>
    <property type="match status" value="1"/>
</dbReference>
<dbReference type="SMART" id="SM01397">
    <property type="entry name" value="Ribosomal_S3Ae"/>
    <property type="match status" value="1"/>
</dbReference>
<sequence length="222" mass="24994">MSEKQKAVAAQERVTISKRDPWALKKWFSVYAPSYLGGVFLAEVPASEPQKLLLRTLEVSLFDITKDLSHLPIKLRFQIHKVDGLKAITRFKGLELTRDYIRSLVRKGTSKVSAIVEVKTKDGWVMRIAVLAITTHRIGSAQKSAMRKRMFDVLTRKASEMDIGQFLKEVLEGLLTADLFVAGKKIAPLRKVEIAKIKVLKYPPEEEQTTVKELTTETVAAS</sequence>
<proteinExistence type="inferred from homology"/>
<accession>A1RSL5</accession>
<name>RS3A_PYRIL</name>
<evidence type="ECO:0000255" key="1">
    <source>
        <dbReference type="HAMAP-Rule" id="MF_00359"/>
    </source>
</evidence>
<evidence type="ECO:0000305" key="2"/>
<keyword id="KW-0687">Ribonucleoprotein</keyword>
<keyword id="KW-0689">Ribosomal protein</keyword>
<feature type="chain" id="PRO_1000005200" description="Small ribosomal subunit protein eS1">
    <location>
        <begin position="1"/>
        <end position="222"/>
    </location>
</feature>
<organism>
    <name type="scientific">Pyrobaculum islandicum (strain DSM 4184 / JCM 9189 / GEO3)</name>
    <dbReference type="NCBI Taxonomy" id="384616"/>
    <lineage>
        <taxon>Archaea</taxon>
        <taxon>Thermoproteota</taxon>
        <taxon>Thermoprotei</taxon>
        <taxon>Thermoproteales</taxon>
        <taxon>Thermoproteaceae</taxon>
        <taxon>Pyrobaculum</taxon>
    </lineage>
</organism>
<protein>
    <recommendedName>
        <fullName evidence="1">Small ribosomal subunit protein eS1</fullName>
    </recommendedName>
    <alternativeName>
        <fullName evidence="2">30S ribosomal protein S3Ae</fullName>
    </alternativeName>
    <alternativeName>
        <fullName evidence="1">Ribosomal protein S1e</fullName>
    </alternativeName>
</protein>
<reference key="1">
    <citation type="submission" date="2006-12" db="EMBL/GenBank/DDBJ databases">
        <title>Complete sequence of Pyrobaculum islandicum DSM 4184.</title>
        <authorList>
            <person name="Copeland A."/>
            <person name="Lucas S."/>
            <person name="Lapidus A."/>
            <person name="Barry K."/>
            <person name="Detter J.C."/>
            <person name="Glavina del Rio T."/>
            <person name="Dalin E."/>
            <person name="Tice H."/>
            <person name="Pitluck S."/>
            <person name="Meincke L."/>
            <person name="Brettin T."/>
            <person name="Bruce D."/>
            <person name="Han C."/>
            <person name="Tapia R."/>
            <person name="Gilna P."/>
            <person name="Schmutz J."/>
            <person name="Larimer F."/>
            <person name="Land M."/>
            <person name="Hauser L."/>
            <person name="Kyrpides N."/>
            <person name="Mikhailova N."/>
            <person name="Cozen A.E."/>
            <person name="Fitz-Gibbon S.T."/>
            <person name="House C.H."/>
            <person name="Saltikov C."/>
            <person name="Lowe T."/>
            <person name="Richardson P."/>
        </authorList>
    </citation>
    <scope>NUCLEOTIDE SEQUENCE [LARGE SCALE GENOMIC DNA]</scope>
    <source>
        <strain>DSM 4184 / JCM 9189 / GEO3</strain>
    </source>
</reference>
<comment type="similarity">
    <text evidence="1">Belongs to the eukaryotic ribosomal protein eS1 family.</text>
</comment>
<gene>
    <name evidence="1" type="primary">rps3ae</name>
    <name type="ordered locus">Pisl_0771</name>
</gene>